<gene>
    <name evidence="1" type="primary">rpsT</name>
    <name evidence="1" type="synonym">rps20</name>
    <name type="ordered locus">SPs1072</name>
</gene>
<sequence>MANIKSAIKRAELNVKANEKNSAQKSAMRTAIKAFEANPSEELFRAASSSIDKAESKGLIHKNKASRDKARLAAKLG</sequence>
<comment type="function">
    <text evidence="1">Binds directly to 16S ribosomal RNA.</text>
</comment>
<comment type="similarity">
    <text evidence="1">Belongs to the bacterial ribosomal protein bS20 family.</text>
</comment>
<comment type="sequence caution" evidence="3">
    <conflict type="erroneous initiation">
        <sequence resource="EMBL-CDS" id="BAC64167"/>
    </conflict>
</comment>
<dbReference type="EMBL" id="BA000034">
    <property type="protein sequence ID" value="BAC64167.1"/>
    <property type="status" value="ALT_INIT"/>
    <property type="molecule type" value="Genomic_DNA"/>
</dbReference>
<dbReference type="SMR" id="P0DE85"/>
<dbReference type="KEGG" id="sps:SPs1072"/>
<dbReference type="HOGENOM" id="CLU_160655_1_1_9"/>
<dbReference type="GO" id="GO:0005829">
    <property type="term" value="C:cytosol"/>
    <property type="evidence" value="ECO:0007669"/>
    <property type="project" value="TreeGrafter"/>
</dbReference>
<dbReference type="GO" id="GO:0015935">
    <property type="term" value="C:small ribosomal subunit"/>
    <property type="evidence" value="ECO:0007669"/>
    <property type="project" value="TreeGrafter"/>
</dbReference>
<dbReference type="GO" id="GO:0070181">
    <property type="term" value="F:small ribosomal subunit rRNA binding"/>
    <property type="evidence" value="ECO:0007669"/>
    <property type="project" value="TreeGrafter"/>
</dbReference>
<dbReference type="GO" id="GO:0003735">
    <property type="term" value="F:structural constituent of ribosome"/>
    <property type="evidence" value="ECO:0007669"/>
    <property type="project" value="InterPro"/>
</dbReference>
<dbReference type="GO" id="GO:0006412">
    <property type="term" value="P:translation"/>
    <property type="evidence" value="ECO:0007669"/>
    <property type="project" value="UniProtKB-UniRule"/>
</dbReference>
<dbReference type="FunFam" id="1.20.58.110:FF:000001">
    <property type="entry name" value="30S ribosomal protein S20"/>
    <property type="match status" value="1"/>
</dbReference>
<dbReference type="Gene3D" id="1.20.58.110">
    <property type="entry name" value="Ribosomal protein S20"/>
    <property type="match status" value="1"/>
</dbReference>
<dbReference type="HAMAP" id="MF_00500">
    <property type="entry name" value="Ribosomal_bS20"/>
    <property type="match status" value="1"/>
</dbReference>
<dbReference type="InterPro" id="IPR002583">
    <property type="entry name" value="Ribosomal_bS20"/>
</dbReference>
<dbReference type="InterPro" id="IPR036510">
    <property type="entry name" value="Ribosomal_bS20_sf"/>
</dbReference>
<dbReference type="NCBIfam" id="TIGR00029">
    <property type="entry name" value="S20"/>
    <property type="match status" value="1"/>
</dbReference>
<dbReference type="PANTHER" id="PTHR33398">
    <property type="entry name" value="30S RIBOSOMAL PROTEIN S20"/>
    <property type="match status" value="1"/>
</dbReference>
<dbReference type="PANTHER" id="PTHR33398:SF1">
    <property type="entry name" value="SMALL RIBOSOMAL SUBUNIT PROTEIN BS20C"/>
    <property type="match status" value="1"/>
</dbReference>
<dbReference type="Pfam" id="PF01649">
    <property type="entry name" value="Ribosomal_S20p"/>
    <property type="match status" value="1"/>
</dbReference>
<dbReference type="SUPFAM" id="SSF46992">
    <property type="entry name" value="Ribosomal protein S20"/>
    <property type="match status" value="1"/>
</dbReference>
<evidence type="ECO:0000255" key="1">
    <source>
        <dbReference type="HAMAP-Rule" id="MF_00500"/>
    </source>
</evidence>
<evidence type="ECO:0000256" key="2">
    <source>
        <dbReference type="SAM" id="MobiDB-lite"/>
    </source>
</evidence>
<evidence type="ECO:0000305" key="3"/>
<proteinExistence type="inferred from homology"/>
<name>RS20_STRPQ</name>
<feature type="chain" id="PRO_0000411532" description="Small ribosomal subunit protein bS20">
    <location>
        <begin position="1"/>
        <end position="77"/>
    </location>
</feature>
<feature type="region of interest" description="Disordered" evidence="2">
    <location>
        <begin position="47"/>
        <end position="77"/>
    </location>
</feature>
<organism>
    <name type="scientific">Streptococcus pyogenes serotype M3 (strain SSI-1)</name>
    <dbReference type="NCBI Taxonomy" id="193567"/>
    <lineage>
        <taxon>Bacteria</taxon>
        <taxon>Bacillati</taxon>
        <taxon>Bacillota</taxon>
        <taxon>Bacilli</taxon>
        <taxon>Lactobacillales</taxon>
        <taxon>Streptococcaceae</taxon>
        <taxon>Streptococcus</taxon>
    </lineage>
</organism>
<reference key="1">
    <citation type="journal article" date="2003" name="Genome Res.">
        <title>Genome sequence of an M3 strain of Streptococcus pyogenes reveals a large-scale genomic rearrangement in invasive strains and new insights into phage evolution.</title>
        <authorList>
            <person name="Nakagawa I."/>
            <person name="Kurokawa K."/>
            <person name="Yamashita A."/>
            <person name="Nakata M."/>
            <person name="Tomiyasu Y."/>
            <person name="Okahashi N."/>
            <person name="Kawabata S."/>
            <person name="Yamazaki K."/>
            <person name="Shiba T."/>
            <person name="Yasunaga T."/>
            <person name="Hayashi H."/>
            <person name="Hattori M."/>
            <person name="Hamada S."/>
        </authorList>
    </citation>
    <scope>NUCLEOTIDE SEQUENCE [LARGE SCALE GENOMIC DNA]</scope>
    <source>
        <strain>SSI-1</strain>
    </source>
</reference>
<keyword id="KW-0687">Ribonucleoprotein</keyword>
<keyword id="KW-0689">Ribosomal protein</keyword>
<keyword id="KW-0694">RNA-binding</keyword>
<keyword id="KW-0699">rRNA-binding</keyword>
<protein>
    <recommendedName>
        <fullName evidence="1">Small ribosomal subunit protein bS20</fullName>
    </recommendedName>
    <alternativeName>
        <fullName evidence="3">30S ribosomal protein S20</fullName>
    </alternativeName>
</protein>
<accession>P0DE85</accession>
<accession>P66510</accession>
<accession>Q99ZH0</accession>